<dbReference type="EMBL" id="AJ004953">
    <property type="protein sequence ID" value="CAA06241.1"/>
    <property type="molecule type" value="mRNA"/>
</dbReference>
<dbReference type="RefSeq" id="NP_001166469.1">
    <molecule id="O70525-1"/>
    <property type="nucleotide sequence ID" value="NM_001172998.1"/>
</dbReference>
<dbReference type="SMR" id="O70525"/>
<dbReference type="FunCoup" id="O70525">
    <property type="interactions" value="1647"/>
</dbReference>
<dbReference type="STRING" id="10141.ENSCPOP00000019431"/>
<dbReference type="GeneID" id="100135597"/>
<dbReference type="KEGG" id="cpoc:100135597"/>
<dbReference type="CTD" id="5830"/>
<dbReference type="eggNOG" id="KOG1125">
    <property type="taxonomic scope" value="Eukaryota"/>
</dbReference>
<dbReference type="InParanoid" id="O70525"/>
<dbReference type="OrthoDB" id="10006023at2759"/>
<dbReference type="Proteomes" id="UP000005447">
    <property type="component" value="Unassembled WGS sequence"/>
</dbReference>
<dbReference type="GO" id="GO:0005829">
    <property type="term" value="C:cytosol"/>
    <property type="evidence" value="ECO:0000250"/>
    <property type="project" value="UniProtKB"/>
</dbReference>
<dbReference type="GO" id="GO:0005782">
    <property type="term" value="C:peroxisomal matrix"/>
    <property type="evidence" value="ECO:0000250"/>
    <property type="project" value="UniProtKB"/>
</dbReference>
<dbReference type="GO" id="GO:0005778">
    <property type="term" value="C:peroxisomal membrane"/>
    <property type="evidence" value="ECO:0007669"/>
    <property type="project" value="TreeGrafter"/>
</dbReference>
<dbReference type="GO" id="GO:0005777">
    <property type="term" value="C:peroxisome"/>
    <property type="evidence" value="ECO:0000250"/>
    <property type="project" value="UniProtKB"/>
</dbReference>
<dbReference type="GO" id="GO:0005052">
    <property type="term" value="F:peroxisome matrix targeting signal-1 binding"/>
    <property type="evidence" value="ECO:0000250"/>
    <property type="project" value="UniProtKB"/>
</dbReference>
<dbReference type="GO" id="GO:0140597">
    <property type="term" value="F:protein carrier chaperone"/>
    <property type="evidence" value="ECO:0000250"/>
    <property type="project" value="UniProtKB"/>
</dbReference>
<dbReference type="GO" id="GO:0000425">
    <property type="term" value="P:pexophagy"/>
    <property type="evidence" value="ECO:0000250"/>
    <property type="project" value="UniProtKB"/>
</dbReference>
<dbReference type="GO" id="GO:0016558">
    <property type="term" value="P:protein import into peroxisome matrix"/>
    <property type="evidence" value="ECO:0000250"/>
    <property type="project" value="UniProtKB"/>
</dbReference>
<dbReference type="GO" id="GO:0016560">
    <property type="term" value="P:protein import into peroxisome matrix, docking"/>
    <property type="evidence" value="ECO:0007669"/>
    <property type="project" value="TreeGrafter"/>
</dbReference>
<dbReference type="GO" id="GO:0016562">
    <property type="term" value="P:protein import into peroxisome matrix, receptor recycling"/>
    <property type="evidence" value="ECO:0000250"/>
    <property type="project" value="UniProtKB"/>
</dbReference>
<dbReference type="GO" id="GO:0044721">
    <property type="term" value="P:protein import into peroxisome matrix, substrate release"/>
    <property type="evidence" value="ECO:0000250"/>
    <property type="project" value="UniProtKB"/>
</dbReference>
<dbReference type="GO" id="GO:0016561">
    <property type="term" value="P:protein import into peroxisome matrix, translocation"/>
    <property type="evidence" value="ECO:0000250"/>
    <property type="project" value="UniProtKB"/>
</dbReference>
<dbReference type="GO" id="GO:0006625">
    <property type="term" value="P:protein targeting to peroxisome"/>
    <property type="evidence" value="ECO:0000250"/>
    <property type="project" value="UniProtKB"/>
</dbReference>
<dbReference type="GO" id="GO:0051262">
    <property type="term" value="P:protein tetramerization"/>
    <property type="evidence" value="ECO:0000250"/>
    <property type="project" value="UniProtKB"/>
</dbReference>
<dbReference type="FunFam" id="1.25.40.10:FF:000034">
    <property type="entry name" value="Peroxisomal biogenesis factor 5 isoform 1"/>
    <property type="match status" value="1"/>
</dbReference>
<dbReference type="Gene3D" id="1.25.40.10">
    <property type="entry name" value="Tetratricopeptide repeat domain"/>
    <property type="match status" value="1"/>
</dbReference>
<dbReference type="InterPro" id="IPR024111">
    <property type="entry name" value="PEX5/PEX5L"/>
</dbReference>
<dbReference type="InterPro" id="IPR011990">
    <property type="entry name" value="TPR-like_helical_dom_sf"/>
</dbReference>
<dbReference type="InterPro" id="IPR019734">
    <property type="entry name" value="TPR_rpt"/>
</dbReference>
<dbReference type="PANTHER" id="PTHR10130:SF2">
    <property type="entry name" value="PEROXISOMAL TARGETING SIGNAL 1 RECEPTOR"/>
    <property type="match status" value="1"/>
</dbReference>
<dbReference type="PANTHER" id="PTHR10130">
    <property type="entry name" value="PEROXISOMAL TARGETING SIGNAL 1 RECEPTOR PEX5"/>
    <property type="match status" value="1"/>
</dbReference>
<dbReference type="Pfam" id="PF13432">
    <property type="entry name" value="TPR_16"/>
    <property type="match status" value="2"/>
</dbReference>
<dbReference type="Pfam" id="PF13181">
    <property type="entry name" value="TPR_8"/>
    <property type="match status" value="1"/>
</dbReference>
<dbReference type="SMART" id="SM00028">
    <property type="entry name" value="TPR"/>
    <property type="match status" value="5"/>
</dbReference>
<dbReference type="SUPFAM" id="SSF48452">
    <property type="entry name" value="TPR-like"/>
    <property type="match status" value="1"/>
</dbReference>
<dbReference type="PROSITE" id="PS50005">
    <property type="entry name" value="TPR"/>
    <property type="match status" value="5"/>
</dbReference>
<dbReference type="PROSITE" id="PS50293">
    <property type="entry name" value="TPR_REGION"/>
    <property type="match status" value="1"/>
</dbReference>
<proteinExistence type="evidence at transcript level"/>
<name>PEX5_CAVPO</name>
<sequence length="640" mass="70920">MAMRELVEGECGGANPLMKLAGHFTQDKALRQEGLRPGPWPPGAPASETVSKPLGVASEDELVAEFLQDQNAPLVSRAPQTFKMDDLLAEMQEIEQSNFRQAPQRAPGVADLALSENWAQEFLAAGDAVDVTQDYNETDWSQEFIAEVTDPLSVSPARWAEEYLEQSEEKLWLGEPEGAATTDRWYDEYHPEEDLQHTASDFVAKVDDPKLANSEFLKFVRQIGEGQVSLESVAGSGRAQAEQWAAEFIQQQGTSDAWVDQFTRPVNTSALDMEFERAKSAIESDVDFWDKLQAELEEMAKRDAEAHPWLSDYDDLTSASYDKGYQFEEENPLRDHPQPFEEGLLRLEEGDLPNAVLLFEAAVQQDPKHMEAWQYLGTTQAENEQELLAISALRRCLELKPDNRTALMALAVSFTNESLQRQACETLRDWLRCTPAYAHLVTPAEEGAGGAGLGSSKRILGSLLSDSLFLEVKELFLAAVRLDPTSIDPDVQCGLGVLFNLSGEYDKAVDCFTAALSVRPNDYLLWNKLGATLANGNQSEEAVAAYRRALELQPGYIRSRYNLGISCINLGAHREAVEHFLEALNMQRKSRGPRGEGGAMSENIWSTLRLALSMLGQSDAYRAADARDLSALLALFGLSQ</sequence>
<organism>
    <name type="scientific">Cavia porcellus</name>
    <name type="common">Guinea pig</name>
    <dbReference type="NCBI Taxonomy" id="10141"/>
    <lineage>
        <taxon>Eukaryota</taxon>
        <taxon>Metazoa</taxon>
        <taxon>Chordata</taxon>
        <taxon>Craniata</taxon>
        <taxon>Vertebrata</taxon>
        <taxon>Euteleostomi</taxon>
        <taxon>Mammalia</taxon>
        <taxon>Eutheria</taxon>
        <taxon>Euarchontoglires</taxon>
        <taxon>Glires</taxon>
        <taxon>Rodentia</taxon>
        <taxon>Hystricomorpha</taxon>
        <taxon>Caviidae</taxon>
        <taxon>Cavia</taxon>
    </lineage>
</organism>
<reference key="1">
    <citation type="journal article" date="2000" name="Biochem. J.">
        <title>The peroxisomal targeting sequence type 1 receptor, Pex5p, and the peroxisomal import efficiency of alanine:glyoxylate aminotransferase.</title>
        <authorList>
            <person name="Knott T.G."/>
            <person name="Birdsey G.M."/>
            <person name="Sinclair K.E."/>
            <person name="Gallagher I.M."/>
            <person name="Purdue P.E."/>
            <person name="Danpure C.J."/>
        </authorList>
    </citation>
    <scope>NUCLEOTIDE SEQUENCE [MRNA] (ISOFORMS 1 AND 2)</scope>
    <scope>FUNCTION</scope>
    <scope>TISSUE SPECIFICITY</scope>
    <source>
        <tissue>Liver</tissue>
    </source>
</reference>
<protein>
    <recommendedName>
        <fullName>Peroxisomal targeting signal 1 receptor</fullName>
        <shortName>PTS1 receptor</shortName>
        <shortName>PTS1R</shortName>
    </recommendedName>
    <alternativeName>
        <fullName>PTS1-BP</fullName>
    </alternativeName>
    <alternativeName>
        <fullName>Peroxin-5</fullName>
    </alternativeName>
    <alternativeName>
        <fullName>Peroxisomal C-terminal targeting signal import receptor</fullName>
    </alternativeName>
    <alternativeName>
        <fullName>Peroxisome receptor 1</fullName>
    </alternativeName>
</protein>
<evidence type="ECO:0000250" key="1">
    <source>
        <dbReference type="UniProtKB" id="A0A1L8FDW4"/>
    </source>
</evidence>
<evidence type="ECO:0000250" key="2">
    <source>
        <dbReference type="UniProtKB" id="P35056"/>
    </source>
</evidence>
<evidence type="ECO:0000250" key="3">
    <source>
        <dbReference type="UniProtKB" id="P50542"/>
    </source>
</evidence>
<evidence type="ECO:0000250" key="4">
    <source>
        <dbReference type="UniProtKB" id="Q920N5"/>
    </source>
</evidence>
<evidence type="ECO:0000269" key="5">
    <source>
    </source>
</evidence>
<evidence type="ECO:0000303" key="6">
    <source>
    </source>
</evidence>
<evidence type="ECO:0000305" key="7"/>
<accession>O70525</accession>
<keyword id="KW-0025">Alternative splicing</keyword>
<keyword id="KW-0963">Cytoplasm</keyword>
<keyword id="KW-1017">Isopeptide bond</keyword>
<keyword id="KW-0576">Peroxisome</keyword>
<keyword id="KW-0597">Phosphoprotein</keyword>
<keyword id="KW-0653">Protein transport</keyword>
<keyword id="KW-1185">Reference proteome</keyword>
<keyword id="KW-0677">Repeat</keyword>
<keyword id="KW-0882">Thioester bond</keyword>
<keyword id="KW-0802">TPR repeat</keyword>
<keyword id="KW-0811">Translocation</keyword>
<keyword id="KW-0813">Transport</keyword>
<keyword id="KW-0832">Ubl conjugation</keyword>
<feature type="chain" id="PRO_0000284881" description="Peroxisomal targeting signal 1 receptor">
    <location>
        <begin position="1"/>
        <end position="640"/>
    </location>
</feature>
<feature type="repeat" description="TPR 1">
    <location>
        <begin position="336"/>
        <end position="369"/>
    </location>
</feature>
<feature type="repeat" description="TPR 2">
    <location>
        <begin position="371"/>
        <end position="403"/>
    </location>
</feature>
<feature type="repeat" description="TPR 3">
    <location>
        <begin position="404"/>
        <end position="437"/>
    </location>
</feature>
<feature type="repeat" description="TPR 4">
    <location>
        <begin position="454"/>
        <end position="486"/>
    </location>
</feature>
<feature type="repeat" description="TPR 5">
    <location>
        <begin position="489"/>
        <end position="522"/>
    </location>
</feature>
<feature type="repeat" description="TPR 6">
    <location>
        <begin position="524"/>
        <end position="556"/>
    </location>
</feature>
<feature type="repeat" description="TPR 7">
    <location>
        <begin position="558"/>
        <end position="590"/>
    </location>
</feature>
<feature type="region of interest" description="Amphipathic helix 1 (AH1)" evidence="1">
    <location>
        <begin position="11"/>
        <end position="33"/>
    </location>
</feature>
<feature type="region of interest" description="Amphipathic helix 2 (AH2)" evidence="1">
    <location>
        <begin position="81"/>
        <end position="99"/>
    </location>
</feature>
<feature type="region of interest" description="Amphipathic helix 3 (AH3)" evidence="1">
    <location>
        <begin position="191"/>
        <end position="207"/>
    </location>
</feature>
<feature type="region of interest" description="Amphipathic helix 4 (AH4)" evidence="1">
    <location>
        <begin position="285"/>
        <end position="301"/>
    </location>
</feature>
<feature type="short sequence motif" description="LVxEF motif" evidence="3">
    <location>
        <begin position="62"/>
        <end position="66"/>
    </location>
</feature>
<feature type="short sequence motif" description="WxxxF/Y motif 1" evidence="1">
    <location>
        <begin position="118"/>
        <end position="122"/>
    </location>
</feature>
<feature type="short sequence motif" description="WxxxF/Y motif 2" evidence="1">
    <location>
        <begin position="140"/>
        <end position="144"/>
    </location>
</feature>
<feature type="short sequence motif" description="WxxxF/Y motif 3" evidence="1">
    <location>
        <begin position="159"/>
        <end position="163"/>
    </location>
</feature>
<feature type="short sequence motif" description="WxxxF/Y motif 4" evidence="1">
    <location>
        <begin position="185"/>
        <end position="189"/>
    </location>
</feature>
<feature type="short sequence motif" description="WxxxF/Y motif 5" evidence="1">
    <location>
        <begin position="244"/>
        <end position="248"/>
    </location>
</feature>
<feature type="short sequence motif" description="WxxxF/Y motif 6" evidence="1">
    <location>
        <begin position="258"/>
        <end position="262"/>
    </location>
</feature>
<feature type="short sequence motif" description="WxxxF/Y motif 7" evidence="1">
    <location>
        <begin position="309"/>
        <end position="313"/>
    </location>
</feature>
<feature type="site" description="Sensor of redox state" evidence="3">
    <location>
        <position position="11"/>
    </location>
</feature>
<feature type="modified residue" description="Phosphoserine" evidence="3">
    <location>
        <position position="115"/>
    </location>
</feature>
<feature type="modified residue" description="Phosphoserine" evidence="3">
    <location>
        <position position="141"/>
    </location>
</feature>
<feature type="modified residue" description="Phosphoserine" evidence="3">
    <location>
        <position position="153"/>
    </location>
</feature>
<feature type="modified residue" description="Phosphoserine" evidence="3">
    <location>
        <position position="155"/>
    </location>
</feature>
<feature type="modified residue" description="Phosphoserine" evidence="3">
    <location>
        <position position="167"/>
    </location>
</feature>
<feature type="modified residue" description="Phosphoserine" evidence="3">
    <location>
        <position position="280"/>
    </location>
</feature>
<feature type="cross-link" description="Glycyl cysteine thioester (Cys-Gly) (interchain with G-Cter in ubiquitin)" evidence="4">
    <location>
        <position position="11"/>
    </location>
</feature>
<feature type="cross-link" description="Glycyl lysine isopeptide (Lys-Gly) (interchain with G-Cter in ubiquitin)" evidence="3">
    <location>
        <position position="210"/>
    </location>
</feature>
<feature type="cross-link" description="Glycyl lysine isopeptide (Lys-Gly) (interchain with G-Cter in ubiquitin)" evidence="3">
    <location>
        <position position="473"/>
    </location>
</feature>
<feature type="cross-link" description="Glycyl lysine isopeptide (Lys-Gly) (interchain with G-Cter in ubiquitin)" evidence="3">
    <location>
        <position position="528"/>
    </location>
</feature>
<feature type="splice variant" id="VSP_024715" description="In isoform 2." evidence="6">
    <location>
        <begin position="216"/>
        <end position="252"/>
    </location>
</feature>
<gene>
    <name type="primary">PEX5</name>
    <name type="synonym">PXR1</name>
</gene>
<comment type="function">
    <text evidence="3 5">Receptor that mediates peroxisomal import of proteins containing a C-terminal PTS1-type tripeptide peroxisomal targeting signal (SKL-type) (PubMed:11085934). Binds to cargo proteins containing a PTS1 peroxisomal targeting signal in the cytosol, and translocates them into the peroxisome matrix by passing through the PEX13-PEX14 docking complex along with cargo proteins (PubMed:11085934). PEX5 receptor is then retrotranslocated into the cytosol, leading to release of bound cargo in the peroxisome matrix, and reset for a subsequent peroxisome import cycle (By similarity).</text>
</comment>
<comment type="function">
    <molecule>Isoform 1</molecule>
    <text evidence="3">In addition to promoting peroxisomal translocation of proteins containing a PTS1 peroxisomal targeting signal, mediates peroxisomal import of proteins containing a C-terminal PTS2-type peroxisomal targeting signal via its interaction with PEX7. Interaction with PEX7 only takes place when PEX7 is associated with cargo proteins containing a PTS2 peroxisomal targeting signal. PEX7 along with PTS2-containing cargo proteins are then translocated through the PEX13-PEX14 docking complex together with PEX5.</text>
</comment>
<comment type="function">
    <molecule>Isoform 2</molecule>
    <text evidence="3">Does not mediate translocation of peroxisomal import of proteins containing a C-terminal PTS2-type peroxisomal targeting signal.</text>
</comment>
<comment type="activity regulation">
    <text evidence="3">Cys-11 acts as a sensor of redox state. In response to oxidative stress, monoubiquitination at Cys-11 is prevented.</text>
</comment>
<comment type="subunit">
    <text evidence="3">Interacts (via WxxxF/Y and LVxEF motifs) with PEX14; promoting translocation through the PEX13-PEX14 docking complex. Interacts with PEX12. Interacts (Cys-linked ubiquitinated) with ZFAND6. Interacts (when ubiquitinated at Lys-210) with p62/SQSTM1. Interacts with DDO; the interaction is direct and required for localization of DDO to the peroxisome (By similarity).</text>
</comment>
<comment type="subunit">
    <molecule>Isoform 1</molecule>
    <text evidence="3">Interacts with PEX7, promoting peroxisomal import of proteins containing a C-terminal PTS2-type peroxisomal targeting signal.</text>
</comment>
<comment type="subcellular location">
    <subcellularLocation>
        <location evidence="3">Cytoplasm</location>
        <location evidence="3">Cytosol</location>
    </subcellularLocation>
    <subcellularLocation>
        <location evidence="3">Peroxisome matrix</location>
    </subcellularLocation>
    <text evidence="1 3">Cycles between the cytosol and the peroxisome matrix (By similarity). Following binding to cargo proteins containing a PTS1 peroxisomal targeting signal in the cytosol, recruited to the docking complex, composed of PEX13 and PEX14, leading to translocation into the peroxisome matrix along with cargo proteins. Export and recycling to the cytosol is initiated by binding to the PEX2-PEX10-PEX12 ligase complex via its unstructured N-terminus that inserts into the ligase pore and emerges in the cytosol (By similarity). Cys-11 of PEX5 is then monoubiquitinated, promoting its extraction from peroxisomal membrane by the PEX1-PEX6 AAA ATPase complex (By similarity). Extraction is accompanied by unfolding of the TPR repeats and release of bound cargo in the peroxisome matrix. The TPR repeats refold in the cytosol and ubiquitination is removed by deubiquitinating enzymes, resetting PEX5 for a subsequent import cycle (By similarity).</text>
</comment>
<comment type="alternative products">
    <event type="alternative splicing"/>
    <isoform>
        <id>O70525-1</id>
        <name>1</name>
        <name evidence="3">PEX5L</name>
        <sequence type="displayed"/>
    </isoform>
    <isoform>
        <id>O70525-2</id>
        <name>2</name>
        <name evidence="3">PEX5S</name>
        <sequence type="described" ref="VSP_024715"/>
    </isoform>
</comment>
<comment type="tissue specificity">
    <text evidence="5">Detected in liver, kidney, adrenal gland, brain, adipose tissue, small intestine, heart, lung, muscle, ovary, spinal cord, skin and spleen.</text>
</comment>
<comment type="domain">
    <text evidence="3">The TPR repeats mediate interaction with proteins containing a C-terminal PTS1-type tripeptide peroxisomal targeting signal (SKL-type).</text>
</comment>
<comment type="domain">
    <text evidence="3">The WxxxF/Y motifs mediate interaction with PEX14, promoting association with the PEX13-PEX14 docking complex.</text>
</comment>
<comment type="domain">
    <text evidence="1">The amphipathic helix 1 and 2 (AH1 and AH2, respectively) are required for PEX5 retrotranslocation and recycling. AH2 mediates interaction with lumenal side of the PEX2-PEX10-PEX12 ligase complex, while AH1 is required for extraction from peroxisomal membrane by the PEX1-PEX6 AAA ATPase complex.</text>
</comment>
<comment type="PTM">
    <text evidence="2 3">Monoubiquitinated at Cys-11 by PEX2 during PEX5 passage through the retrotranslocation channel (By similarity). Cys-11 monoubiquitination acts as a recognition signal for the PEX1-PEX6 complex and is required for PEX5 extraction and export from peroxisomes. Monoubiquitination at Cys-11 is removed by USP9X in the cytosol, resetting PEX5 for a subsequent import cycle (By similarity). When PEX5 recycling is compromised, polyubiquitinated by PEX10 during its passage through the retrotranslocation channel, leading to its degradation (By similarity). Monoubiquitination at Lys-473 by TRIM37 promotes its stability by preventing its polyubiquitination and degradation by the proteasome. Ubiquitination at Lys-528 is not mediated by the PEX2-PEX10-PEX12 ligase complex and is not related to PEX5 recycling. Monoubiquitinated at Lys-210 by PEX2 following phosphorylation by ATM in response to starvation or reactive oxygen species (ROS), leading to PEX5 recognition by p62/SQSTM1 and induction of pexophagy (By similarity).</text>
</comment>
<comment type="PTM">
    <text evidence="3">Phosphorylated at Ser-141 by ATM in response to reactive oxygen species (ROS), promoting monoubiquitination at Lys-210 and induction of pexophagy.</text>
</comment>
<comment type="similarity">
    <text evidence="7">Belongs to the peroxisomal targeting signal receptor family.</text>
</comment>